<feature type="chain" id="PRO_0000121929" description="tRNA pseudouridine synthase B">
    <location>
        <begin position="1"/>
        <end position="309"/>
    </location>
</feature>
<feature type="domain" description="PUA" evidence="1">
    <location>
        <begin position="229"/>
        <end position="306"/>
    </location>
</feature>
<feature type="active site" description="Nucleophile" evidence="1">
    <location>
        <position position="39"/>
    </location>
</feature>
<feature type="strand" evidence="4">
    <location>
        <begin position="4"/>
        <end position="10"/>
    </location>
</feature>
<feature type="strand" evidence="4">
    <location>
        <begin position="12"/>
        <end position="14"/>
    </location>
</feature>
<feature type="helix" evidence="4">
    <location>
        <begin position="16"/>
        <end position="26"/>
    </location>
</feature>
<feature type="strand" evidence="4">
    <location>
        <begin position="32"/>
        <end position="36"/>
    </location>
</feature>
<feature type="strand" evidence="4">
    <location>
        <begin position="43"/>
        <end position="50"/>
    </location>
</feature>
<feature type="helix" evidence="4">
    <location>
        <begin position="51"/>
        <end position="60"/>
    </location>
</feature>
<feature type="strand" evidence="4">
    <location>
        <begin position="65"/>
        <end position="73"/>
    </location>
</feature>
<feature type="strand" evidence="4">
    <location>
        <begin position="75"/>
        <end position="81"/>
    </location>
</feature>
<feature type="strand" evidence="4">
    <location>
        <begin position="86"/>
        <end position="89"/>
    </location>
</feature>
<feature type="helix" evidence="4">
    <location>
        <begin position="96"/>
        <end position="104"/>
    </location>
</feature>
<feature type="strand" evidence="4">
    <location>
        <begin position="105"/>
        <end position="112"/>
    </location>
</feature>
<feature type="strand" evidence="4">
    <location>
        <begin position="116"/>
        <end position="119"/>
    </location>
</feature>
<feature type="strand" evidence="6">
    <location>
        <begin position="121"/>
        <end position="126"/>
    </location>
</feature>
<feature type="helix" evidence="4">
    <location>
        <begin position="127"/>
        <end position="132"/>
    </location>
</feature>
<feature type="strand" evidence="5">
    <location>
        <begin position="137"/>
        <end position="139"/>
    </location>
</feature>
<feature type="strand" evidence="4">
    <location>
        <begin position="142"/>
        <end position="155"/>
    </location>
</feature>
<feature type="strand" evidence="4">
    <location>
        <begin position="158"/>
        <end position="165"/>
    </location>
</feature>
<feature type="helix" evidence="4">
    <location>
        <begin position="171"/>
        <end position="181"/>
    </location>
</feature>
<feature type="strand" evidence="4">
    <location>
        <begin position="186"/>
        <end position="196"/>
    </location>
</feature>
<feature type="helix" evidence="4">
    <location>
        <begin position="201"/>
        <end position="203"/>
    </location>
</feature>
<feature type="turn" evidence="4">
    <location>
        <begin position="207"/>
        <end position="209"/>
    </location>
</feature>
<feature type="helix" evidence="4">
    <location>
        <begin position="212"/>
        <end position="218"/>
    </location>
</feature>
<feature type="helix" evidence="4">
    <location>
        <begin position="222"/>
        <end position="224"/>
    </location>
</feature>
<feature type="strand" evidence="4">
    <location>
        <begin position="231"/>
        <end position="233"/>
    </location>
</feature>
<feature type="turn" evidence="4">
    <location>
        <begin position="236"/>
        <end position="238"/>
    </location>
</feature>
<feature type="helix" evidence="4">
    <location>
        <begin position="239"/>
        <end position="242"/>
    </location>
</feature>
<feature type="turn" evidence="4">
    <location>
        <begin position="243"/>
        <end position="245"/>
    </location>
</feature>
<feature type="strand" evidence="4">
    <location>
        <begin position="248"/>
        <end position="252"/>
    </location>
</feature>
<feature type="strand" evidence="5">
    <location>
        <begin position="253"/>
        <end position="255"/>
    </location>
</feature>
<feature type="strand" evidence="4">
    <location>
        <begin position="264"/>
        <end position="268"/>
    </location>
</feature>
<feature type="strand" evidence="4">
    <location>
        <begin position="270"/>
        <end position="272"/>
    </location>
</feature>
<feature type="strand" evidence="4">
    <location>
        <begin position="274"/>
        <end position="282"/>
    </location>
</feature>
<feature type="helix" evidence="5">
    <location>
        <begin position="287"/>
        <end position="290"/>
    </location>
</feature>
<feature type="strand" evidence="5">
    <location>
        <begin position="291"/>
        <end position="294"/>
    </location>
</feature>
<feature type="strand" evidence="4">
    <location>
        <begin position="298"/>
        <end position="305"/>
    </location>
</feature>
<sequence length="309" mass="35459">MKHGILVAYKPKGPTSHDVVDEVRKKLKTRKVGHGGTLDPFACGVLIIGVNQGTRILEFYKDLKKVYWVKMRLGLITETFDITGEVVEERECNVTEEEIREAIFSFVGEYDQVPPAYSAKKYKGERLYKLAREGKIINLPPKRVKIFKIWDVNIEGRDVSFRVEVSPGTYIRSLCMDIGYKLGCGATAVELVRESVGPHTIEESLNVFEAAPEEIENRIIPLEKCLEWLPRVVVHQESTKMILNGSQIHLEMLKEWDGFKKGEVVRVFNEEGRLLALAEAERNSSFLETLRKHERNERVLTLRKVFNTR</sequence>
<gene>
    <name evidence="1 3" type="primary">truB</name>
    <name type="ordered locus">TM_0856</name>
</gene>
<organism>
    <name type="scientific">Thermotoga maritima (strain ATCC 43589 / DSM 3109 / JCM 10099 / NBRC 100826 / MSB8)</name>
    <dbReference type="NCBI Taxonomy" id="243274"/>
    <lineage>
        <taxon>Bacteria</taxon>
        <taxon>Thermotogati</taxon>
        <taxon>Thermotogota</taxon>
        <taxon>Thermotogae</taxon>
        <taxon>Thermotogales</taxon>
        <taxon>Thermotogaceae</taxon>
        <taxon>Thermotoga</taxon>
    </lineage>
</organism>
<keyword id="KW-0002">3D-structure</keyword>
<keyword id="KW-0413">Isomerase</keyword>
<keyword id="KW-1185">Reference proteome</keyword>
<keyword id="KW-0819">tRNA processing</keyword>
<name>TRUB_THEMA</name>
<reference key="1">
    <citation type="journal article" date="1999" name="Nature">
        <title>Evidence for lateral gene transfer between Archaea and Bacteria from genome sequence of Thermotoga maritima.</title>
        <authorList>
            <person name="Nelson K.E."/>
            <person name="Clayton R.A."/>
            <person name="Gill S.R."/>
            <person name="Gwinn M.L."/>
            <person name="Dodson R.J."/>
            <person name="Haft D.H."/>
            <person name="Hickey E.K."/>
            <person name="Peterson J.D."/>
            <person name="Nelson W.C."/>
            <person name="Ketchum K.A."/>
            <person name="McDonald L.A."/>
            <person name="Utterback T.R."/>
            <person name="Malek J.A."/>
            <person name="Linher K.D."/>
            <person name="Garrett M.M."/>
            <person name="Stewart A.M."/>
            <person name="Cotton M.D."/>
            <person name="Pratt M.S."/>
            <person name="Phillips C.A."/>
            <person name="Richardson D.L."/>
            <person name="Heidelberg J.F."/>
            <person name="Sutton G.G."/>
            <person name="Fleischmann R.D."/>
            <person name="Eisen J.A."/>
            <person name="White O."/>
            <person name="Salzberg S.L."/>
            <person name="Smith H.O."/>
            <person name="Venter J.C."/>
            <person name="Fraser C.M."/>
        </authorList>
    </citation>
    <scope>NUCLEOTIDE SEQUENCE [LARGE SCALE GENOMIC DNA]</scope>
    <source>
        <strain>ATCC 43589 / DSM 3109 / JCM 10099 / NBRC 100826 / MSB8</strain>
    </source>
</reference>
<reference key="2">
    <citation type="journal article" date="2003" name="Acta Crystallogr. D">
        <title>Preliminary X-ray crystallographic analysis of tRNA pseudouridine 55 synthase from the thermophilic eubacterium Thermotoga maritima.</title>
        <authorList>
            <person name="Wouters J."/>
            <person name="Tricot C."/>
            <person name="Durbecq V."/>
            <person name="Roovers M."/>
            <person name="Stalon V."/>
            <person name="Droogmans L."/>
        </authorList>
    </citation>
    <scope>CRYSTALLIZATION</scope>
    <source>
        <strain>ATCC 43589 / DSM 3109 / JCM 10099 / NBRC 100826 / MSB8</strain>
    </source>
</reference>
<reference key="3">
    <citation type="journal article" date="2003" name="Proc. Natl. Acad. Sci. U.S.A.">
        <title>Structure of tRNA pseudouridine synthase TruB and its RNA complex: RNA recognition through a combination of rigid docking and induced fit.</title>
        <authorList>
            <person name="Pan H."/>
            <person name="Agarwalla S."/>
            <person name="Moustakas D.T."/>
            <person name="Finer-Moore J."/>
            <person name="Stroud R.M."/>
        </authorList>
    </citation>
    <scope>X-RAY CRYSTALLOGRAPHY (2.1 ANGSTROMS) OF COMPLEX WITH RNA</scope>
</reference>
<proteinExistence type="evidence at protein level"/>
<accession>Q9WZW0</accession>
<evidence type="ECO:0000255" key="1">
    <source>
        <dbReference type="HAMAP-Rule" id="MF_01080"/>
    </source>
</evidence>
<evidence type="ECO:0000303" key="2">
    <source>
    </source>
</evidence>
<evidence type="ECO:0000303" key="3">
    <source>
    </source>
</evidence>
<evidence type="ECO:0007829" key="4">
    <source>
        <dbReference type="PDB" id="1R3E"/>
    </source>
</evidence>
<evidence type="ECO:0007829" key="5">
    <source>
        <dbReference type="PDB" id="1ZE1"/>
    </source>
</evidence>
<evidence type="ECO:0007829" key="6">
    <source>
        <dbReference type="PDB" id="2AB4"/>
    </source>
</evidence>
<protein>
    <recommendedName>
        <fullName evidence="1">tRNA pseudouridine synthase B</fullName>
        <ecNumber evidence="1">5.4.99.25</ecNumber>
    </recommendedName>
    <alternativeName>
        <fullName evidence="1 2">tRNA pseudouridine(55) synthase</fullName>
        <shortName evidence="1">Psi55 synthase</shortName>
    </alternativeName>
    <alternativeName>
        <fullName evidence="1">tRNA pseudouridylate synthase</fullName>
    </alternativeName>
    <alternativeName>
        <fullName evidence="1">tRNA-uridine isomerase</fullName>
    </alternativeName>
</protein>
<comment type="function">
    <text evidence="1">Responsible for synthesis of pseudouridine from uracil-55 in the psi GC loop of transfer RNAs.</text>
</comment>
<comment type="catalytic activity">
    <reaction evidence="1">
        <text>uridine(55) in tRNA = pseudouridine(55) in tRNA</text>
        <dbReference type="Rhea" id="RHEA:42532"/>
        <dbReference type="Rhea" id="RHEA-COMP:10101"/>
        <dbReference type="Rhea" id="RHEA-COMP:10102"/>
        <dbReference type="ChEBI" id="CHEBI:65314"/>
        <dbReference type="ChEBI" id="CHEBI:65315"/>
        <dbReference type="EC" id="5.4.99.25"/>
    </reaction>
</comment>
<comment type="similarity">
    <text evidence="1">Belongs to the pseudouridine synthase TruB family. Type 1 subfamily.</text>
</comment>
<dbReference type="EC" id="5.4.99.25" evidence="1"/>
<dbReference type="EMBL" id="AE000512">
    <property type="protein sequence ID" value="AAD35938.1"/>
    <property type="molecule type" value="Genomic_DNA"/>
</dbReference>
<dbReference type="PIR" id="A72325">
    <property type="entry name" value="A72325"/>
</dbReference>
<dbReference type="RefSeq" id="NP_228665.1">
    <property type="nucleotide sequence ID" value="NC_000853.1"/>
</dbReference>
<dbReference type="RefSeq" id="WP_004080766.1">
    <property type="nucleotide sequence ID" value="NZ_CP011107.1"/>
</dbReference>
<dbReference type="PDB" id="1R3E">
    <property type="method" value="X-ray"/>
    <property type="resolution" value="2.10 A"/>
    <property type="chains" value="A=1-309"/>
</dbReference>
<dbReference type="PDB" id="1ZE1">
    <property type="method" value="X-ray"/>
    <property type="resolution" value="2.90 A"/>
    <property type="chains" value="A/B/C/D=1-309"/>
</dbReference>
<dbReference type="PDB" id="1ZE2">
    <property type="method" value="X-ray"/>
    <property type="resolution" value="3.00 A"/>
    <property type="chains" value="A/B=1-309"/>
</dbReference>
<dbReference type="PDB" id="2AB4">
    <property type="method" value="X-ray"/>
    <property type="resolution" value="2.40 A"/>
    <property type="chains" value="A=1-309"/>
</dbReference>
<dbReference type="PDBsum" id="1R3E"/>
<dbReference type="PDBsum" id="1ZE1"/>
<dbReference type="PDBsum" id="1ZE2"/>
<dbReference type="PDBsum" id="2AB4"/>
<dbReference type="SMR" id="Q9WZW0"/>
<dbReference type="FunCoup" id="Q9WZW0">
    <property type="interactions" value="316"/>
</dbReference>
<dbReference type="STRING" id="243274.TM_0856"/>
<dbReference type="PaxDb" id="243274-THEMA_00355"/>
<dbReference type="EnsemblBacteria" id="AAD35938">
    <property type="protein sequence ID" value="AAD35938"/>
    <property type="gene ID" value="TM_0856"/>
</dbReference>
<dbReference type="KEGG" id="tma:TM0856"/>
<dbReference type="KEGG" id="tmi:THEMA_00355"/>
<dbReference type="KEGG" id="tmm:Tmari_0858"/>
<dbReference type="KEGG" id="tmw:THMA_0878"/>
<dbReference type="eggNOG" id="COG0130">
    <property type="taxonomic scope" value="Bacteria"/>
</dbReference>
<dbReference type="InParanoid" id="Q9WZW0"/>
<dbReference type="OrthoDB" id="9802309at2"/>
<dbReference type="BRENDA" id="5.4.99.25">
    <property type="organism ID" value="6331"/>
</dbReference>
<dbReference type="EvolutionaryTrace" id="Q9WZW0"/>
<dbReference type="Proteomes" id="UP000008183">
    <property type="component" value="Chromosome"/>
</dbReference>
<dbReference type="GO" id="GO:0009982">
    <property type="term" value="F:pseudouridine synthase activity"/>
    <property type="evidence" value="ECO:0000318"/>
    <property type="project" value="GO_Central"/>
</dbReference>
<dbReference type="GO" id="GO:0003723">
    <property type="term" value="F:RNA binding"/>
    <property type="evidence" value="ECO:0007669"/>
    <property type="project" value="InterPro"/>
</dbReference>
<dbReference type="GO" id="GO:0160148">
    <property type="term" value="F:tRNA pseudouridine(55) synthase activity"/>
    <property type="evidence" value="ECO:0007669"/>
    <property type="project" value="UniProtKB-EC"/>
</dbReference>
<dbReference type="GO" id="GO:1990481">
    <property type="term" value="P:mRNA pseudouridine synthesis"/>
    <property type="evidence" value="ECO:0000318"/>
    <property type="project" value="GO_Central"/>
</dbReference>
<dbReference type="GO" id="GO:0006400">
    <property type="term" value="P:tRNA modification"/>
    <property type="evidence" value="ECO:0000318"/>
    <property type="project" value="GO_Central"/>
</dbReference>
<dbReference type="GO" id="GO:0031119">
    <property type="term" value="P:tRNA pseudouridine synthesis"/>
    <property type="evidence" value="ECO:0007669"/>
    <property type="project" value="UniProtKB-UniRule"/>
</dbReference>
<dbReference type="CDD" id="cd02573">
    <property type="entry name" value="PseudoU_synth_EcTruB"/>
    <property type="match status" value="1"/>
</dbReference>
<dbReference type="CDD" id="cd21905">
    <property type="entry name" value="PUA_TruB_thermotogae"/>
    <property type="match status" value="1"/>
</dbReference>
<dbReference type="FunFam" id="3.30.2350.10:FF:000046">
    <property type="entry name" value="tRNA pseudouridine synthase B"/>
    <property type="match status" value="1"/>
</dbReference>
<dbReference type="Gene3D" id="3.30.2350.10">
    <property type="entry name" value="Pseudouridine synthase"/>
    <property type="match status" value="1"/>
</dbReference>
<dbReference type="Gene3D" id="2.30.130.10">
    <property type="entry name" value="PUA domain"/>
    <property type="match status" value="1"/>
</dbReference>
<dbReference type="HAMAP" id="MF_01080">
    <property type="entry name" value="TruB_bact"/>
    <property type="match status" value="1"/>
</dbReference>
<dbReference type="InterPro" id="IPR020103">
    <property type="entry name" value="PsdUridine_synth_cat_dom_sf"/>
</dbReference>
<dbReference type="InterPro" id="IPR002501">
    <property type="entry name" value="PsdUridine_synth_N"/>
</dbReference>
<dbReference type="InterPro" id="IPR002478">
    <property type="entry name" value="PUA"/>
</dbReference>
<dbReference type="InterPro" id="IPR015947">
    <property type="entry name" value="PUA-like_sf"/>
</dbReference>
<dbReference type="InterPro" id="IPR036974">
    <property type="entry name" value="PUA_sf"/>
</dbReference>
<dbReference type="InterPro" id="IPR014780">
    <property type="entry name" value="tRNA_psdUridine_synth_TruB"/>
</dbReference>
<dbReference type="InterPro" id="IPR032819">
    <property type="entry name" value="TruB_C"/>
</dbReference>
<dbReference type="NCBIfam" id="TIGR00431">
    <property type="entry name" value="TruB"/>
    <property type="match status" value="1"/>
</dbReference>
<dbReference type="PANTHER" id="PTHR13767:SF2">
    <property type="entry name" value="PSEUDOURIDYLATE SYNTHASE TRUB1"/>
    <property type="match status" value="1"/>
</dbReference>
<dbReference type="PANTHER" id="PTHR13767">
    <property type="entry name" value="TRNA-PSEUDOURIDINE SYNTHASE"/>
    <property type="match status" value="1"/>
</dbReference>
<dbReference type="Pfam" id="PF01472">
    <property type="entry name" value="PUA"/>
    <property type="match status" value="1"/>
</dbReference>
<dbReference type="Pfam" id="PF16198">
    <property type="entry name" value="TruB_C_2"/>
    <property type="match status" value="1"/>
</dbReference>
<dbReference type="Pfam" id="PF01509">
    <property type="entry name" value="TruB_N"/>
    <property type="match status" value="1"/>
</dbReference>
<dbReference type="SUPFAM" id="SSF55120">
    <property type="entry name" value="Pseudouridine synthase"/>
    <property type="match status" value="1"/>
</dbReference>
<dbReference type="SUPFAM" id="SSF88697">
    <property type="entry name" value="PUA domain-like"/>
    <property type="match status" value="1"/>
</dbReference>
<dbReference type="PROSITE" id="PS50890">
    <property type="entry name" value="PUA"/>
    <property type="match status" value="1"/>
</dbReference>